<comment type="function">
    <text evidence="1">Component of the spermatoproteasome, a proteasome specifically found in testis that promotes acetylation-dependent degradation of histones, thereby participating actively to the exchange of histones during spermatogenesis. The proteasome is a protein complex that degrades unneeded or damaged proteins by proteolysis, a chemical reaction that breaks peptide bonds. Required for 20S core proteasome assembly, essential for the degradation of meiotic proteins RAD51 and RPA1 at late prophase I and the progression of meiosis I during spermatogenesis. Localizes to the synaptonemal complex, a 'zipper'-like structure that holds homologous chromosome pairs in synapsis during meiotic prophase I.</text>
</comment>
<comment type="subunit">
    <text evidence="1">Component of the outer alpha-ring of the 20S proteasome core which is composed of 28 subunits that are arranged in four stacked rings, resulting in a barrel-shaped structure. The catalytic chamber with the active sites is on the inside of the barrel. Interacts with canonical subunits of the spermatoproteasome, including proteasome activators PSME4 (also called PA200) and PSME3 (also called PA28-gamma). Interacts with proteasome-interacting proteins chaperones, ubiquitin ligases and ubiquitin specific proteases. Interacts with meiotic proteins cyclin dependent kinase CDK1 and the ATPase TRIP13 as well as proteins of the synaptonemal complex SIX6OS1 and SYCE3.</text>
</comment>
<comment type="subcellular location">
    <subcellularLocation>
        <location evidence="1">Nucleus</location>
    </subcellularLocation>
    <text evidence="1">Localizes to the central region of the synaptonemal complex.</text>
</comment>
<comment type="alternative products">
    <event type="alternative splicing"/>
    <isoform>
        <id>Q8TAA3-1</id>
        <name>1</name>
        <sequence type="displayed"/>
    </isoform>
    <isoform>
        <id>Q8TAA3-2</id>
        <name>2</name>
        <sequence type="described" ref="VSP_005285"/>
    </isoform>
    <isoform>
        <id>Q8TAA3-5</id>
        <name>3</name>
        <sequence type="described" ref="VSP_018602"/>
    </isoform>
    <text>Experimental confirmation may be lacking for some isoforms.</text>
</comment>
<comment type="similarity">
    <text evidence="2">Belongs to the peptidase T1A family.</text>
</comment>
<accession>Q8TAA3</accession>
<accession>B0YJ75</accession>
<accession>Q8IVP4</accession>
<accession>Q8TA98</accession>
<accession>Q8TAA2</accession>
<proteinExistence type="evidence at protein level"/>
<dbReference type="EMBL" id="EF445014">
    <property type="protein sequence ID" value="ACA06053.1"/>
    <property type="molecule type" value="Genomic_DNA"/>
</dbReference>
<dbReference type="EMBL" id="AC091021">
    <property type="status" value="NOT_ANNOTATED_CDS"/>
    <property type="molecule type" value="Genomic_DNA"/>
</dbReference>
<dbReference type="EMBL" id="AC016839">
    <property type="status" value="NOT_ANNOTATED_CDS"/>
    <property type="molecule type" value="Genomic_DNA"/>
</dbReference>
<dbReference type="EMBL" id="CH471088">
    <property type="protein sequence ID" value="EAX01214.1"/>
    <property type="molecule type" value="Genomic_DNA"/>
</dbReference>
<dbReference type="EMBL" id="BC028371">
    <property type="protein sequence ID" value="AAH28371.1"/>
    <property type="molecule type" value="mRNA"/>
</dbReference>
<dbReference type="EMBL" id="BC028686">
    <property type="protein sequence ID" value="AAH28686.1"/>
    <property type="molecule type" value="mRNA"/>
</dbReference>
<dbReference type="EMBL" id="BC042820">
    <property type="protein sequence ID" value="AAH42820.1"/>
    <property type="molecule type" value="mRNA"/>
</dbReference>
<dbReference type="CCDS" id="CCDS32808.1">
    <molecule id="Q8TAA3-1"/>
</dbReference>
<dbReference type="CCDS" id="CCDS45842.1">
    <molecule id="Q8TAA3-5"/>
</dbReference>
<dbReference type="CCDS" id="CCDS45843.1">
    <molecule id="Q8TAA3-2"/>
</dbReference>
<dbReference type="RefSeq" id="NP_001020267.1">
    <molecule id="Q8TAA3-5"/>
    <property type="nucleotide sequence ID" value="NM_001025096.2"/>
</dbReference>
<dbReference type="RefSeq" id="NP_001020268.1">
    <molecule id="Q8TAA3-2"/>
    <property type="nucleotide sequence ID" value="NM_001025097.2"/>
</dbReference>
<dbReference type="RefSeq" id="NP_653263.2">
    <molecule id="Q8TAA3-1"/>
    <property type="nucleotide sequence ID" value="NM_144662.3"/>
</dbReference>
<dbReference type="SMR" id="Q8TAA3"/>
<dbReference type="BioGRID" id="126804">
    <property type="interactions" value="73"/>
</dbReference>
<dbReference type="ComplexPortal" id="CPX-9021">
    <property type="entry name" value="20S spermatoproteasome complex"/>
</dbReference>
<dbReference type="FunCoup" id="Q8TAA3">
    <property type="interactions" value="627"/>
</dbReference>
<dbReference type="IntAct" id="Q8TAA3">
    <property type="interactions" value="18"/>
</dbReference>
<dbReference type="STRING" id="9606.ENSP00000311121"/>
<dbReference type="BindingDB" id="Q8TAA3"/>
<dbReference type="ChEMBL" id="CHEMBL2364701"/>
<dbReference type="MEROPS" id="T01.978"/>
<dbReference type="iPTMnet" id="Q8TAA3"/>
<dbReference type="PhosphoSitePlus" id="Q8TAA3"/>
<dbReference type="BioMuta" id="PSMA8"/>
<dbReference type="DMDM" id="108936006"/>
<dbReference type="jPOST" id="Q8TAA3"/>
<dbReference type="MassIVE" id="Q8TAA3"/>
<dbReference type="PaxDb" id="9606-ENSP00000311121"/>
<dbReference type="PeptideAtlas" id="Q8TAA3"/>
<dbReference type="ProteomicsDB" id="73844">
    <molecule id="Q8TAA3-1"/>
</dbReference>
<dbReference type="ProteomicsDB" id="73845">
    <molecule id="Q8TAA3-2"/>
</dbReference>
<dbReference type="ProteomicsDB" id="73846">
    <molecule id="Q8TAA3-5"/>
</dbReference>
<dbReference type="Antibodypedia" id="22107">
    <property type="antibodies" value="72 antibodies from 22 providers"/>
</dbReference>
<dbReference type="DNASU" id="143471"/>
<dbReference type="Ensembl" id="ENST00000308268.10">
    <molecule id="Q8TAA3-1"/>
    <property type="protein sequence ID" value="ENSP00000311121.6"/>
    <property type="gene ID" value="ENSG00000154611.15"/>
</dbReference>
<dbReference type="Ensembl" id="ENST00000343848.10">
    <molecule id="Q8TAA3-2"/>
    <property type="protein sequence ID" value="ENSP00000345584.6"/>
    <property type="gene ID" value="ENSG00000154611.15"/>
</dbReference>
<dbReference type="Ensembl" id="ENST00000415576.7">
    <molecule id="Q8TAA3-5"/>
    <property type="protein sequence ID" value="ENSP00000409284.2"/>
    <property type="gene ID" value="ENSG00000154611.15"/>
</dbReference>
<dbReference type="GeneID" id="143471"/>
<dbReference type="KEGG" id="hsa:143471"/>
<dbReference type="MANE-Select" id="ENST00000415576.7">
    <molecule id="Q8TAA3-5"/>
    <property type="protein sequence ID" value="ENSP00000409284.2"/>
    <property type="RefSeq nucleotide sequence ID" value="NM_001025096.2"/>
    <property type="RefSeq protein sequence ID" value="NP_001020267.1"/>
</dbReference>
<dbReference type="UCSC" id="uc002kvo.4">
    <molecule id="Q8TAA3-1"/>
    <property type="organism name" value="human"/>
</dbReference>
<dbReference type="AGR" id="HGNC:22985"/>
<dbReference type="CTD" id="143471"/>
<dbReference type="DisGeNET" id="143471"/>
<dbReference type="GeneCards" id="PSMA8"/>
<dbReference type="HGNC" id="HGNC:22985">
    <property type="gene designation" value="PSMA8"/>
</dbReference>
<dbReference type="HPA" id="ENSG00000154611">
    <property type="expression patterns" value="Tissue enriched (testis)"/>
</dbReference>
<dbReference type="MIM" id="617841">
    <property type="type" value="gene"/>
</dbReference>
<dbReference type="neXtProt" id="NX_Q8TAA3"/>
<dbReference type="OpenTargets" id="ENSG00000154611"/>
<dbReference type="PharmGKB" id="PA134969470"/>
<dbReference type="VEuPathDB" id="HostDB:ENSG00000154611"/>
<dbReference type="eggNOG" id="KOG0183">
    <property type="taxonomic scope" value="Eukaryota"/>
</dbReference>
<dbReference type="GeneTree" id="ENSGT00940000160354"/>
<dbReference type="HOGENOM" id="CLU_035750_4_0_1"/>
<dbReference type="InParanoid" id="Q8TAA3"/>
<dbReference type="OMA" id="AGTHSEW"/>
<dbReference type="OrthoDB" id="3145928at2759"/>
<dbReference type="PAN-GO" id="Q8TAA3">
    <property type="GO annotations" value="4 GO annotations based on evolutionary models"/>
</dbReference>
<dbReference type="PhylomeDB" id="Q8TAA3"/>
<dbReference type="TreeFam" id="TF106212"/>
<dbReference type="PathwayCommons" id="Q8TAA3"/>
<dbReference type="Reactome" id="R-HSA-9907900">
    <property type="pathway name" value="Proteasome assembly"/>
</dbReference>
<dbReference type="SignaLink" id="Q8TAA3"/>
<dbReference type="BioGRID-ORCS" id="143471">
    <property type="hits" value="14 hits in 1159 CRISPR screens"/>
</dbReference>
<dbReference type="CD-CODE" id="91857CE7">
    <property type="entry name" value="Nucleolus"/>
</dbReference>
<dbReference type="ChiTaRS" id="PSMA8">
    <property type="organism name" value="human"/>
</dbReference>
<dbReference type="GenomeRNAi" id="143471"/>
<dbReference type="Pharos" id="Q8TAA3">
    <property type="development level" value="Tdark"/>
</dbReference>
<dbReference type="PRO" id="PR:Q8TAA3"/>
<dbReference type="Proteomes" id="UP000005640">
    <property type="component" value="Chromosome 18"/>
</dbReference>
<dbReference type="RNAct" id="Q8TAA3">
    <property type="molecule type" value="protein"/>
</dbReference>
<dbReference type="Bgee" id="ENSG00000154611">
    <property type="expression patterns" value="Expressed in right testis and 45 other cell types or tissues"/>
</dbReference>
<dbReference type="ExpressionAtlas" id="Q8TAA3">
    <property type="expression patterns" value="baseline and differential"/>
</dbReference>
<dbReference type="GO" id="GO:0005737">
    <property type="term" value="C:cytoplasm"/>
    <property type="evidence" value="ECO:0007669"/>
    <property type="project" value="UniProtKB-ARBA"/>
</dbReference>
<dbReference type="GO" id="GO:0070062">
    <property type="term" value="C:extracellular exosome"/>
    <property type="evidence" value="ECO:0007005"/>
    <property type="project" value="UniProtKB"/>
</dbReference>
<dbReference type="GO" id="GO:0005634">
    <property type="term" value="C:nucleus"/>
    <property type="evidence" value="ECO:0007005"/>
    <property type="project" value="UniProtKB"/>
</dbReference>
<dbReference type="GO" id="GO:0019773">
    <property type="term" value="C:proteasome core complex, alpha-subunit complex"/>
    <property type="evidence" value="ECO:0000250"/>
    <property type="project" value="UniProtKB"/>
</dbReference>
<dbReference type="GO" id="GO:1990111">
    <property type="term" value="C:spermatoproteasome complex"/>
    <property type="evidence" value="ECO:0000250"/>
    <property type="project" value="UniProtKB"/>
</dbReference>
<dbReference type="GO" id="GO:0030154">
    <property type="term" value="P:cell differentiation"/>
    <property type="evidence" value="ECO:0007669"/>
    <property type="project" value="UniProtKB-KW"/>
</dbReference>
<dbReference type="GO" id="GO:0051321">
    <property type="term" value="P:meiotic cell cycle"/>
    <property type="evidence" value="ECO:0000250"/>
    <property type="project" value="UniProtKB"/>
</dbReference>
<dbReference type="GO" id="GO:0010498">
    <property type="term" value="P:proteasomal protein catabolic process"/>
    <property type="evidence" value="ECO:0000250"/>
    <property type="project" value="UniProtKB"/>
</dbReference>
<dbReference type="GO" id="GO:0043161">
    <property type="term" value="P:proteasome-mediated ubiquitin-dependent protein catabolic process"/>
    <property type="evidence" value="ECO:0000318"/>
    <property type="project" value="GO_Central"/>
</dbReference>
<dbReference type="GO" id="GO:0060631">
    <property type="term" value="P:regulation of meiosis I"/>
    <property type="evidence" value="ECO:0007669"/>
    <property type="project" value="Ensembl"/>
</dbReference>
<dbReference type="GO" id="GO:0007283">
    <property type="term" value="P:spermatogenesis"/>
    <property type="evidence" value="ECO:0007669"/>
    <property type="project" value="UniProtKB-KW"/>
</dbReference>
<dbReference type="CDD" id="cd03755">
    <property type="entry name" value="proteasome_alpha_type_7"/>
    <property type="match status" value="1"/>
</dbReference>
<dbReference type="FunFam" id="3.60.20.10:FF:000018">
    <property type="entry name" value="Proteasome subunit alpha type"/>
    <property type="match status" value="1"/>
</dbReference>
<dbReference type="Gene3D" id="3.60.20.10">
    <property type="entry name" value="Glutamine Phosphoribosylpyrophosphate, subunit 1, domain 1"/>
    <property type="match status" value="1"/>
</dbReference>
<dbReference type="InterPro" id="IPR029055">
    <property type="entry name" value="Ntn_hydrolases_N"/>
</dbReference>
<dbReference type="InterPro" id="IPR050115">
    <property type="entry name" value="Proteasome_alpha"/>
</dbReference>
<dbReference type="InterPro" id="IPR023332">
    <property type="entry name" value="Proteasome_alpha-type"/>
</dbReference>
<dbReference type="InterPro" id="IPR000426">
    <property type="entry name" value="Proteasome_asu_N"/>
</dbReference>
<dbReference type="InterPro" id="IPR001353">
    <property type="entry name" value="Proteasome_sua/b"/>
</dbReference>
<dbReference type="NCBIfam" id="NF003075">
    <property type="entry name" value="PRK03996.1"/>
    <property type="match status" value="1"/>
</dbReference>
<dbReference type="PANTHER" id="PTHR11599">
    <property type="entry name" value="PROTEASOME SUBUNIT ALPHA/BETA"/>
    <property type="match status" value="1"/>
</dbReference>
<dbReference type="Pfam" id="PF00227">
    <property type="entry name" value="Proteasome"/>
    <property type="match status" value="1"/>
</dbReference>
<dbReference type="Pfam" id="PF10584">
    <property type="entry name" value="Proteasome_A_N"/>
    <property type="match status" value="1"/>
</dbReference>
<dbReference type="SMART" id="SM00948">
    <property type="entry name" value="Proteasome_A_N"/>
    <property type="match status" value="1"/>
</dbReference>
<dbReference type="SUPFAM" id="SSF56235">
    <property type="entry name" value="N-terminal nucleophile aminohydrolases (Ntn hydrolases)"/>
    <property type="match status" value="1"/>
</dbReference>
<dbReference type="PROSITE" id="PS00388">
    <property type="entry name" value="PROTEASOME_ALPHA_1"/>
    <property type="match status" value="1"/>
</dbReference>
<dbReference type="PROSITE" id="PS51475">
    <property type="entry name" value="PROTEASOME_ALPHA_2"/>
    <property type="match status" value="1"/>
</dbReference>
<feature type="chain" id="PRO_0000124149" description="Proteasome subunit alpha-type 8">
    <location>
        <begin position="1"/>
        <end position="256"/>
    </location>
</feature>
<feature type="splice variant" id="VSP_005285" description="In isoform 2." evidence="3">
    <location>
        <begin position="40"/>
        <end position="83"/>
    </location>
</feature>
<feature type="splice variant" id="VSP_018602" description="In isoform 3." evidence="3">
    <location>
        <begin position="77"/>
        <end position="82"/>
    </location>
</feature>
<feature type="sequence conflict" description="In Ref. 4; AAH28371/AAH28686." evidence="4" ref="4">
    <original>K</original>
    <variation>R</variation>
    <location>
        <position position="212"/>
    </location>
</feature>
<organism>
    <name type="scientific">Homo sapiens</name>
    <name type="common">Human</name>
    <dbReference type="NCBI Taxonomy" id="9606"/>
    <lineage>
        <taxon>Eukaryota</taxon>
        <taxon>Metazoa</taxon>
        <taxon>Chordata</taxon>
        <taxon>Craniata</taxon>
        <taxon>Vertebrata</taxon>
        <taxon>Euteleostomi</taxon>
        <taxon>Mammalia</taxon>
        <taxon>Eutheria</taxon>
        <taxon>Euarchontoglires</taxon>
        <taxon>Primates</taxon>
        <taxon>Haplorrhini</taxon>
        <taxon>Catarrhini</taxon>
        <taxon>Hominidae</taxon>
        <taxon>Homo</taxon>
    </lineage>
</organism>
<keyword id="KW-0025">Alternative splicing</keyword>
<keyword id="KW-0221">Differentiation</keyword>
<keyword id="KW-0539">Nucleus</keyword>
<keyword id="KW-0647">Proteasome</keyword>
<keyword id="KW-1267">Proteomics identification</keyword>
<keyword id="KW-1185">Reference proteome</keyword>
<keyword id="KW-0744">Spermatogenesis</keyword>
<reference key="1">
    <citation type="submission" date="2007-02" db="EMBL/GenBank/DDBJ databases">
        <authorList>
            <consortium name="NHLBI resequencing and genotyping service (RS&amp;G)"/>
        </authorList>
    </citation>
    <scope>NUCLEOTIDE SEQUENCE [GENOMIC DNA]</scope>
</reference>
<reference key="2">
    <citation type="journal article" date="2005" name="Nature">
        <title>DNA sequence and analysis of human chromosome 18.</title>
        <authorList>
            <person name="Nusbaum C."/>
            <person name="Zody M.C."/>
            <person name="Borowsky M.L."/>
            <person name="Kamal M."/>
            <person name="Kodira C.D."/>
            <person name="Taylor T.D."/>
            <person name="Whittaker C.A."/>
            <person name="Chang J.L."/>
            <person name="Cuomo C.A."/>
            <person name="Dewar K."/>
            <person name="FitzGerald M.G."/>
            <person name="Yang X."/>
            <person name="Abouelleil A."/>
            <person name="Allen N.R."/>
            <person name="Anderson S."/>
            <person name="Bloom T."/>
            <person name="Bugalter B."/>
            <person name="Butler J."/>
            <person name="Cook A."/>
            <person name="DeCaprio D."/>
            <person name="Engels R."/>
            <person name="Garber M."/>
            <person name="Gnirke A."/>
            <person name="Hafez N."/>
            <person name="Hall J.L."/>
            <person name="Norman C.H."/>
            <person name="Itoh T."/>
            <person name="Jaffe D.B."/>
            <person name="Kuroki Y."/>
            <person name="Lehoczky J."/>
            <person name="Lui A."/>
            <person name="Macdonald P."/>
            <person name="Mauceli E."/>
            <person name="Mikkelsen T.S."/>
            <person name="Naylor J.W."/>
            <person name="Nicol R."/>
            <person name="Nguyen C."/>
            <person name="Noguchi H."/>
            <person name="O'Leary S.B."/>
            <person name="Piqani B."/>
            <person name="Smith C.L."/>
            <person name="Talamas J.A."/>
            <person name="Topham K."/>
            <person name="Totoki Y."/>
            <person name="Toyoda A."/>
            <person name="Wain H.M."/>
            <person name="Young S.K."/>
            <person name="Zeng Q."/>
            <person name="Zimmer A.R."/>
            <person name="Fujiyama A."/>
            <person name="Hattori M."/>
            <person name="Birren B.W."/>
            <person name="Sakaki Y."/>
            <person name="Lander E.S."/>
        </authorList>
    </citation>
    <scope>NUCLEOTIDE SEQUENCE [LARGE SCALE GENOMIC DNA]</scope>
</reference>
<reference key="3">
    <citation type="submission" date="2005-07" db="EMBL/GenBank/DDBJ databases">
        <authorList>
            <person name="Mural R.J."/>
            <person name="Istrail S."/>
            <person name="Sutton G.G."/>
            <person name="Florea L."/>
            <person name="Halpern A.L."/>
            <person name="Mobarry C.M."/>
            <person name="Lippert R."/>
            <person name="Walenz B."/>
            <person name="Shatkay H."/>
            <person name="Dew I."/>
            <person name="Miller J.R."/>
            <person name="Flanigan M.J."/>
            <person name="Edwards N.J."/>
            <person name="Bolanos R."/>
            <person name="Fasulo D."/>
            <person name="Halldorsson B.V."/>
            <person name="Hannenhalli S."/>
            <person name="Turner R."/>
            <person name="Yooseph S."/>
            <person name="Lu F."/>
            <person name="Nusskern D.R."/>
            <person name="Shue B.C."/>
            <person name="Zheng X.H."/>
            <person name="Zhong F."/>
            <person name="Delcher A.L."/>
            <person name="Huson D.H."/>
            <person name="Kravitz S.A."/>
            <person name="Mouchard L."/>
            <person name="Reinert K."/>
            <person name="Remington K.A."/>
            <person name="Clark A.G."/>
            <person name="Waterman M.S."/>
            <person name="Eichler E.E."/>
            <person name="Adams M.D."/>
            <person name="Hunkapiller M.W."/>
            <person name="Myers E.W."/>
            <person name="Venter J.C."/>
        </authorList>
    </citation>
    <scope>NUCLEOTIDE SEQUENCE [LARGE SCALE GENOMIC DNA]</scope>
</reference>
<reference key="4">
    <citation type="journal article" date="2004" name="Genome Res.">
        <title>The status, quality, and expansion of the NIH full-length cDNA project: the Mammalian Gene Collection (MGC).</title>
        <authorList>
            <consortium name="The MGC Project Team"/>
        </authorList>
    </citation>
    <scope>NUCLEOTIDE SEQUENCE [LARGE SCALE MRNA] (ISOFORMS 2 AND 3)</scope>
    <source>
        <tissue>Testis</tissue>
    </source>
</reference>
<protein>
    <recommendedName>
        <fullName>Proteasome subunit alpha-type 8</fullName>
    </recommendedName>
    <alternativeName>
        <fullName evidence="1">Proteasome alpha 4 subunit</fullName>
        <shortName evidence="1">Alpha4s</shortName>
    </alternativeName>
    <alternativeName>
        <fullName>Proteasome subunit alpha-type 7-like</fullName>
    </alternativeName>
</protein>
<gene>
    <name type="primary">PSMA8</name>
    <name type="synonym">PSMA7L</name>
</gene>
<sequence length="256" mass="28530">MASRYDRAITVFSPDGHLFQVEYAQEAVKKGSTAVGIRGTNIVVLGVEKKSVAKLQDERTVRKICALDDHVCMAFAVLTIFIGLTADARVVINRARVECQSHKLTVEDPVTVEYITRFIATLKQKYTQSNGRRPFGISALIVGFDDDGISRLYQTDPSGTYHAWKANAIGRSAKTVREFLEKNYTEDAIASDSEAIKLAIKALLEVVQSGGKNIELAIIRRNQPLKMFSAKEVELYVTEIEKEKEEAEKKKSKKSV</sequence>
<evidence type="ECO:0000250" key="1">
    <source>
        <dbReference type="UniProtKB" id="Q9CWH6"/>
    </source>
</evidence>
<evidence type="ECO:0000255" key="2">
    <source>
        <dbReference type="PROSITE-ProRule" id="PRU00808"/>
    </source>
</evidence>
<evidence type="ECO:0000303" key="3">
    <source>
    </source>
</evidence>
<evidence type="ECO:0000305" key="4"/>
<name>PSMA8_HUMAN</name>